<feature type="signal peptide" evidence="3">
    <location>
        <begin position="1"/>
        <end position="30"/>
    </location>
</feature>
<feature type="propeptide" id="PRO_0000251746" description="Cathelin-like domain (CLD)" evidence="1">
    <location>
        <begin position="31"/>
        <end position="131"/>
    </location>
</feature>
<feature type="peptide" id="PRO_0000251747" description="Antibacterial peptide FALL-39" evidence="1">
    <location>
        <begin position="132"/>
        <end position="170"/>
    </location>
</feature>
<feature type="peptide" id="PRO_0000251748" description="Antibacterial peptide LL-37" evidence="1">
    <location>
        <begin position="134"/>
        <end position="170"/>
    </location>
</feature>
<feature type="region of interest" description="Active core" evidence="1">
    <location>
        <begin position="150"/>
        <end position="162"/>
    </location>
</feature>
<feature type="disulfide bond" evidence="1">
    <location>
        <begin position="86"/>
        <end position="97"/>
    </location>
</feature>
<feature type="disulfide bond" evidence="1">
    <location>
        <begin position="108"/>
        <end position="125"/>
    </location>
</feature>
<evidence type="ECO:0000250" key="1">
    <source>
        <dbReference type="UniProtKB" id="P49913"/>
    </source>
</evidence>
<evidence type="ECO:0000250" key="2">
    <source>
        <dbReference type="UniProtKB" id="P54229"/>
    </source>
</evidence>
<evidence type="ECO:0000255" key="3"/>
<evidence type="ECO:0000305" key="4"/>
<reference key="1">
    <citation type="journal article" date="2006" name="J. Biol. Chem.">
        <title>Evolution of the primate cathelicidin. Correlation between structural variations and antimicrobial activity.</title>
        <authorList>
            <person name="Zelezetsky I."/>
            <person name="Pontillo A."/>
            <person name="Puzzi L."/>
            <person name="Antcheva N."/>
            <person name="Segat L."/>
            <person name="Pacor S."/>
            <person name="Crovella S."/>
            <person name="Tossi A."/>
        </authorList>
    </citation>
    <scope>NUCLEOTIDE SEQUENCE [GENOMIC DNA]</scope>
</reference>
<comment type="function">
    <text evidence="1">Antimicrobial protein that is an integral component of the innate immune system (By similarity). Binds to bacterial lipopolysaccharides (LPS) (By similarity). Acts via neutrophil N-formyl peptide receptors to enhance the release of CXCL2 (By similarity). Postsecretory processing generates multiple cathelicidin antimicrobial peptides with various lengths which act as a topical antimicrobial defense in sweat on skin (By similarity). The unprocessed precursor form, cathelicidin antimicrobial peptide, inhibits the growth of Gram-negative E.coli and E.aerogenes with efficiencies comparable to that of the mature peptide LL-37 (in vitro) (By similarity).</text>
</comment>
<comment type="function">
    <molecule>Antibacterial peptide LL-37</molecule>
    <text evidence="1">Antimicrobial peptide that is an integral component of the innate immune system (By similarity). Binds to bacterial lipopolysaccharides (LPS) (By similarity). Causes membrane permeabilization by forming transmembrane pores (in vitro) (By similarity). Causes lysis of E.coli (By similarity). Exhibits antimicrobial activity against Gram-negative bacteria such as P.aeruginosa, S.typhimurium, E.aerogenes, E.coli and P.syringae, Gram-positive bacteria such as L.monocytogenes, S.epidermidis, S.pyogenes and S.aureus, as well as vancomycin-resistant enterococci (in vitro) (By similarity). Exhibits antimicrobial activity against methicillin-resistant S.aureus, P.mirabilis, and C.albicans in low-salt media, but not in media containing 100 mM NaCl (in vitro) (By similarity). Forms chiral supramolecular assemblies with quinolone signal (PQS) molecules of P.aeruginosa, which may lead to interference of bacterial quorum signaling and perturbance of bacterial biofilm formation (By similarity). May form supramolecular fiber-like assemblies on bacterial membranes (By similarity). Induces cytokine and chemokine producation as well as TNF/TNFA and CSF2/GMCSF production in normal human keratinocytes (By similarity). Exhibits hemolytic activity against red blood cells (By similarity).</text>
</comment>
<comment type="function">
    <molecule>Antibacterial peptide FALL-39</molecule>
    <text evidence="1">Exhibits antimicrobial activity against E.coli and B.megaterium (in vitro).</text>
</comment>
<comment type="subunit">
    <molecule>Antibacterial peptide LL-37</molecule>
    <text evidence="1">Monomer, homodimer or homotrimer (in vitro) (By similarity). Oligomerizes as tetra- or hexamer in solution (in vitro) (By similarity).</text>
</comment>
<comment type="subcellular location">
    <subcellularLocation>
        <location evidence="2">Secreted</location>
    </subcellularLocation>
    <subcellularLocation>
        <location evidence="2">Vesicle</location>
    </subcellularLocation>
    <text evidence="2">Stored as pro-peptide in granules and phagolysosomes of neutrophils (By similarity). Secreted in sweat onto skin (By similarity).</text>
</comment>
<comment type="domain">
    <text evidence="2">The cathelin-like domain (CLD), which is the propeptide part, does not seem to exhibit auto-inhibitory function, as it does not inhibit the antibacterial activity of antibacterial peptide LL-37.</text>
</comment>
<comment type="domain">
    <molecule>Antibacterial peptide LL-37</molecule>
    <text evidence="2">Undergoes conformational change in the presence of lipid A, transitioning from a random coil to an alpha-helical structure.</text>
</comment>
<comment type="domain">
    <molecule>Antibacterial peptide LL-37</molecule>
    <text evidence="2">Residues 17-29 of LL-37 represent the active core of the antimicrobial peptide. Forms ribbon-like fibrils and exhibits antibacterial activity against Gram-positive M.luteus (By similarity). Also exhibits antibacterial activity against Gram-negative E.coli and P.fluorescens (By similarity).</text>
</comment>
<comment type="PTM">
    <text evidence="1">Proteolytically cleaved by proteinase PRTN3 into antibacterial peptide LL-37 (By similarity). Proteolytically cleaved by cathepsin CTSG and neutrophil elastase ELANE (By similarity).</text>
</comment>
<comment type="PTM">
    <molecule>Antibacterial peptide LL-37</molecule>
    <text evidence="1">Resistant to proteolytic degradation in solution, and when bound to both zwitterionic (mimicking mammalian membranes) and negatively charged membranes (mimicking bacterial membranes).</text>
</comment>
<comment type="PTM">
    <text evidence="1">After secretion onto the skin surface, the CAMP gene product is processed by a serine protease-dependent mechanism into multiple novel antimicrobial peptides distinct from and shorter than cathelicidin LL-37 (By similarity). These peptides show enhanced antimicrobial action, acquiring the ability to kill skin pathogens such as S.aureus, E.coli and C.albicans. These peptides have lost the ability to stimulate CXCL8/IL8 release from keratinocytes (By similarity). The peptides act synergistically, killing bacteria at lower concentrations when present together, and maintain activity at increased salt condition (By similarity).</text>
</comment>
<comment type="similarity">
    <text evidence="4">Belongs to the cathelicidin family.</text>
</comment>
<proteinExistence type="inferred from homology"/>
<sequence>MKTQRDGPSLGRWSLVLLLLGLTMPLAITAQVLSYQEAVLRAVDGLNQRSLDANLYRLLNLDPRPTLDGDPDTPKPVSFTVKETVCPRTIQRSPEECDFKKDGLVKRCVGTVILNQARDSFDISCDKDERKVARLGGFLQKAREKIARGFKKIGQKINDFLGKLAPRTEA</sequence>
<dbReference type="EMBL" id="DQ471357">
    <property type="protein sequence ID" value="ABE96621.1"/>
    <property type="molecule type" value="Genomic_DNA"/>
</dbReference>
<dbReference type="SMR" id="Q1KLY5"/>
<dbReference type="GO" id="GO:0005615">
    <property type="term" value="C:extracellular space"/>
    <property type="evidence" value="ECO:0007669"/>
    <property type="project" value="TreeGrafter"/>
</dbReference>
<dbReference type="GO" id="GO:0031982">
    <property type="term" value="C:vesicle"/>
    <property type="evidence" value="ECO:0007669"/>
    <property type="project" value="UniProtKB-SubCell"/>
</dbReference>
<dbReference type="GO" id="GO:0001530">
    <property type="term" value="F:lipopolysaccharide binding"/>
    <property type="evidence" value="ECO:0007669"/>
    <property type="project" value="TreeGrafter"/>
</dbReference>
<dbReference type="GO" id="GO:0061844">
    <property type="term" value="P:antimicrobial humoral immune response mediated by antimicrobial peptide"/>
    <property type="evidence" value="ECO:0007669"/>
    <property type="project" value="TreeGrafter"/>
</dbReference>
<dbReference type="GO" id="GO:0050829">
    <property type="term" value="P:defense response to Gram-negative bacterium"/>
    <property type="evidence" value="ECO:0007669"/>
    <property type="project" value="TreeGrafter"/>
</dbReference>
<dbReference type="GO" id="GO:0050830">
    <property type="term" value="P:defense response to Gram-positive bacterium"/>
    <property type="evidence" value="ECO:0007669"/>
    <property type="project" value="TreeGrafter"/>
</dbReference>
<dbReference type="GO" id="GO:0045087">
    <property type="term" value="P:innate immune response"/>
    <property type="evidence" value="ECO:0007669"/>
    <property type="project" value="UniProtKB-KW"/>
</dbReference>
<dbReference type="GO" id="GO:0042119">
    <property type="term" value="P:neutrophil activation"/>
    <property type="evidence" value="ECO:0000250"/>
    <property type="project" value="UniProtKB"/>
</dbReference>
<dbReference type="FunFam" id="3.10.450.10:FF:000003">
    <property type="entry name" value="Cathelicidin antimicrobial peptide"/>
    <property type="match status" value="1"/>
</dbReference>
<dbReference type="Gene3D" id="3.10.450.10">
    <property type="match status" value="1"/>
</dbReference>
<dbReference type="InterPro" id="IPR001894">
    <property type="entry name" value="Cathelicidin-like"/>
</dbReference>
<dbReference type="InterPro" id="IPR018216">
    <property type="entry name" value="Cathelicidin_CS"/>
</dbReference>
<dbReference type="InterPro" id="IPR022746">
    <property type="entry name" value="Cathlecidin_C"/>
</dbReference>
<dbReference type="InterPro" id="IPR046350">
    <property type="entry name" value="Cystatin_sf"/>
</dbReference>
<dbReference type="PANTHER" id="PTHR10206">
    <property type="entry name" value="CATHELICIDIN"/>
    <property type="match status" value="1"/>
</dbReference>
<dbReference type="PANTHER" id="PTHR10206:SF2">
    <property type="entry name" value="CATHELICIDIN ANTIMICROBIAL PEPTIDE"/>
    <property type="match status" value="1"/>
</dbReference>
<dbReference type="Pfam" id="PF12153">
    <property type="entry name" value="CAP18_C"/>
    <property type="match status" value="1"/>
</dbReference>
<dbReference type="Pfam" id="PF00666">
    <property type="entry name" value="Cathelicidins"/>
    <property type="match status" value="1"/>
</dbReference>
<dbReference type="SUPFAM" id="SSF54403">
    <property type="entry name" value="Cystatin/monellin"/>
    <property type="match status" value="1"/>
</dbReference>
<dbReference type="PROSITE" id="PS00946">
    <property type="entry name" value="CATHELICIDINS_1"/>
    <property type="match status" value="1"/>
</dbReference>
<dbReference type="PROSITE" id="PS00947">
    <property type="entry name" value="CATHELICIDINS_2"/>
    <property type="match status" value="1"/>
</dbReference>
<accession>Q1KLY5</accession>
<organism>
    <name type="scientific">Cebus capucinus</name>
    <name type="common">White-faced sapajou</name>
    <dbReference type="NCBI Taxonomy" id="9516"/>
    <lineage>
        <taxon>Eukaryota</taxon>
        <taxon>Metazoa</taxon>
        <taxon>Chordata</taxon>
        <taxon>Craniata</taxon>
        <taxon>Vertebrata</taxon>
        <taxon>Euteleostomi</taxon>
        <taxon>Mammalia</taxon>
        <taxon>Eutheria</taxon>
        <taxon>Euarchontoglires</taxon>
        <taxon>Primates</taxon>
        <taxon>Haplorrhini</taxon>
        <taxon>Platyrrhini</taxon>
        <taxon>Cebidae</taxon>
        <taxon>Cebinae</taxon>
        <taxon>Cebus</taxon>
    </lineage>
</organism>
<protein>
    <recommendedName>
        <fullName evidence="1">Cathelicidin antimicrobial peptide</fullName>
    </recommendedName>
    <component>
        <recommendedName>
            <fullName evidence="1">Antibacterial peptide FALL-39</fullName>
        </recommendedName>
        <alternativeName>
            <fullName evidence="1">FALL-39 peptide antibiotic</fullName>
        </alternativeName>
    </component>
    <component>
        <recommendedName>
            <fullName evidence="1">Antibacterial peptide LL-37</fullName>
        </recommendedName>
    </component>
</protein>
<keyword id="KW-0044">Antibiotic</keyword>
<keyword id="KW-0929">Antimicrobial</keyword>
<keyword id="KW-0165">Cleavage on pair of basic residues</keyword>
<keyword id="KW-1015">Disulfide bond</keyword>
<keyword id="KW-0391">Immunity</keyword>
<keyword id="KW-0399">Innate immunity</keyword>
<keyword id="KW-0964">Secreted</keyword>
<keyword id="KW-0732">Signal</keyword>
<name>CAMP_CEBCA</name>
<gene>
    <name evidence="1" type="primary">CAMP</name>
</gene>